<dbReference type="EC" id="3.6.1.23" evidence="1"/>
<dbReference type="EMBL" id="CP000863">
    <property type="protein sequence ID" value="ACC56149.1"/>
    <property type="molecule type" value="Genomic_DNA"/>
</dbReference>
<dbReference type="RefSeq" id="WP_000868152.1">
    <property type="nucleotide sequence ID" value="NZ_CP031380.1"/>
</dbReference>
<dbReference type="SMR" id="B2HV28"/>
<dbReference type="GeneID" id="92892815"/>
<dbReference type="KEGG" id="abc:ACICU_00837"/>
<dbReference type="HOGENOM" id="CLU_068508_1_1_6"/>
<dbReference type="UniPathway" id="UPA00610">
    <property type="reaction ID" value="UER00666"/>
</dbReference>
<dbReference type="Proteomes" id="UP000008839">
    <property type="component" value="Chromosome"/>
</dbReference>
<dbReference type="GO" id="GO:0004170">
    <property type="term" value="F:dUTP diphosphatase activity"/>
    <property type="evidence" value="ECO:0007669"/>
    <property type="project" value="UniProtKB-UniRule"/>
</dbReference>
<dbReference type="GO" id="GO:0000287">
    <property type="term" value="F:magnesium ion binding"/>
    <property type="evidence" value="ECO:0007669"/>
    <property type="project" value="UniProtKB-UniRule"/>
</dbReference>
<dbReference type="GO" id="GO:0006226">
    <property type="term" value="P:dUMP biosynthetic process"/>
    <property type="evidence" value="ECO:0007669"/>
    <property type="project" value="UniProtKB-UniRule"/>
</dbReference>
<dbReference type="GO" id="GO:0046081">
    <property type="term" value="P:dUTP catabolic process"/>
    <property type="evidence" value="ECO:0007669"/>
    <property type="project" value="InterPro"/>
</dbReference>
<dbReference type="CDD" id="cd07557">
    <property type="entry name" value="trimeric_dUTPase"/>
    <property type="match status" value="1"/>
</dbReference>
<dbReference type="FunFam" id="2.70.40.10:FF:000002">
    <property type="entry name" value="dUTP diphosphatase"/>
    <property type="match status" value="1"/>
</dbReference>
<dbReference type="Gene3D" id="2.70.40.10">
    <property type="match status" value="1"/>
</dbReference>
<dbReference type="HAMAP" id="MF_00116">
    <property type="entry name" value="dUTPase_bact"/>
    <property type="match status" value="1"/>
</dbReference>
<dbReference type="InterPro" id="IPR008181">
    <property type="entry name" value="dUTPase"/>
</dbReference>
<dbReference type="InterPro" id="IPR029054">
    <property type="entry name" value="dUTPase-like"/>
</dbReference>
<dbReference type="InterPro" id="IPR036157">
    <property type="entry name" value="dUTPase-like_sf"/>
</dbReference>
<dbReference type="InterPro" id="IPR033704">
    <property type="entry name" value="dUTPase_trimeric"/>
</dbReference>
<dbReference type="NCBIfam" id="TIGR00576">
    <property type="entry name" value="dut"/>
    <property type="match status" value="1"/>
</dbReference>
<dbReference type="NCBIfam" id="NF001862">
    <property type="entry name" value="PRK00601.1"/>
    <property type="match status" value="1"/>
</dbReference>
<dbReference type="PANTHER" id="PTHR11241">
    <property type="entry name" value="DEOXYURIDINE 5'-TRIPHOSPHATE NUCLEOTIDOHYDROLASE"/>
    <property type="match status" value="1"/>
</dbReference>
<dbReference type="PANTHER" id="PTHR11241:SF0">
    <property type="entry name" value="DEOXYURIDINE 5'-TRIPHOSPHATE NUCLEOTIDOHYDROLASE"/>
    <property type="match status" value="1"/>
</dbReference>
<dbReference type="Pfam" id="PF00692">
    <property type="entry name" value="dUTPase"/>
    <property type="match status" value="1"/>
</dbReference>
<dbReference type="SUPFAM" id="SSF51283">
    <property type="entry name" value="dUTPase-like"/>
    <property type="match status" value="1"/>
</dbReference>
<name>DUT_ACIBC</name>
<organism>
    <name type="scientific">Acinetobacter baumannii (strain ACICU)</name>
    <dbReference type="NCBI Taxonomy" id="405416"/>
    <lineage>
        <taxon>Bacteria</taxon>
        <taxon>Pseudomonadati</taxon>
        <taxon>Pseudomonadota</taxon>
        <taxon>Gammaproteobacteria</taxon>
        <taxon>Moraxellales</taxon>
        <taxon>Moraxellaceae</taxon>
        <taxon>Acinetobacter</taxon>
        <taxon>Acinetobacter calcoaceticus/baumannii complex</taxon>
    </lineage>
</organism>
<proteinExistence type="inferred from homology"/>
<feature type="chain" id="PRO_1000094935" description="Deoxyuridine 5'-triphosphate nucleotidohydrolase">
    <location>
        <begin position="1"/>
        <end position="150"/>
    </location>
</feature>
<feature type="binding site" evidence="1">
    <location>
        <begin position="69"/>
        <end position="71"/>
    </location>
    <ligand>
        <name>substrate</name>
    </ligand>
</feature>
<feature type="binding site" evidence="1">
    <location>
        <position position="82"/>
    </location>
    <ligand>
        <name>substrate</name>
    </ligand>
</feature>
<feature type="binding site" evidence="1">
    <location>
        <begin position="86"/>
        <end position="88"/>
    </location>
    <ligand>
        <name>substrate</name>
    </ligand>
</feature>
<feature type="binding site" evidence="1">
    <location>
        <position position="96"/>
    </location>
    <ligand>
        <name>substrate</name>
    </ligand>
</feature>
<sequence length="150" mass="16371">MKVQVKLLDPRLGKEWPLPSYATAGSAGLDLRACLDEAIEIEPGQTVLVKTGMAIYIHDVNFAGLILPRSGLGHKHGIVLGNLVGLIDSDYQGELMVSVWNRGQTTFRLEPGERLAQYVLVPVVQAEFEQVEEFEETLRGAGGFGHTGKQ</sequence>
<protein>
    <recommendedName>
        <fullName evidence="1">Deoxyuridine 5'-triphosphate nucleotidohydrolase</fullName>
        <shortName evidence="1">dUTPase</shortName>
        <ecNumber evidence="1">3.6.1.23</ecNumber>
    </recommendedName>
    <alternativeName>
        <fullName evidence="1">dUTP pyrophosphatase</fullName>
    </alternativeName>
</protein>
<accession>B2HV28</accession>
<reference key="1">
    <citation type="journal article" date="2008" name="Antimicrob. Agents Chemother.">
        <title>Whole-genome pyrosequencing of an epidemic multidrug-resistant Acinetobacter baumannii strain belonging to the European clone II group.</title>
        <authorList>
            <person name="Iacono M."/>
            <person name="Villa L."/>
            <person name="Fortini D."/>
            <person name="Bordoni R."/>
            <person name="Imperi F."/>
            <person name="Bonnal R.J."/>
            <person name="Sicheritz-Ponten T."/>
            <person name="De Bellis G."/>
            <person name="Visca P."/>
            <person name="Cassone A."/>
            <person name="Carattoli A."/>
        </authorList>
    </citation>
    <scope>NUCLEOTIDE SEQUENCE [LARGE SCALE GENOMIC DNA]</scope>
    <source>
        <strain>ACICU</strain>
    </source>
</reference>
<comment type="function">
    <text evidence="1">This enzyme is involved in nucleotide metabolism: it produces dUMP, the immediate precursor of thymidine nucleotides and it decreases the intracellular concentration of dUTP so that uracil cannot be incorporated into DNA.</text>
</comment>
<comment type="catalytic activity">
    <reaction evidence="1">
        <text>dUTP + H2O = dUMP + diphosphate + H(+)</text>
        <dbReference type="Rhea" id="RHEA:10248"/>
        <dbReference type="ChEBI" id="CHEBI:15377"/>
        <dbReference type="ChEBI" id="CHEBI:15378"/>
        <dbReference type="ChEBI" id="CHEBI:33019"/>
        <dbReference type="ChEBI" id="CHEBI:61555"/>
        <dbReference type="ChEBI" id="CHEBI:246422"/>
        <dbReference type="EC" id="3.6.1.23"/>
    </reaction>
</comment>
<comment type="cofactor">
    <cofactor evidence="1">
        <name>Mg(2+)</name>
        <dbReference type="ChEBI" id="CHEBI:18420"/>
    </cofactor>
</comment>
<comment type="pathway">
    <text evidence="1">Pyrimidine metabolism; dUMP biosynthesis; dUMP from dCTP (dUTP route): step 2/2.</text>
</comment>
<comment type="similarity">
    <text evidence="1">Belongs to the dUTPase family.</text>
</comment>
<keyword id="KW-0378">Hydrolase</keyword>
<keyword id="KW-0460">Magnesium</keyword>
<keyword id="KW-0479">Metal-binding</keyword>
<keyword id="KW-0546">Nucleotide metabolism</keyword>
<evidence type="ECO:0000255" key="1">
    <source>
        <dbReference type="HAMAP-Rule" id="MF_00116"/>
    </source>
</evidence>
<gene>
    <name evidence="1" type="primary">dut</name>
    <name type="ordered locus">ACICU_00837</name>
</gene>